<accession>Q02RC8</accession>
<protein>
    <recommendedName>
        <fullName evidence="1">Small ribosomal subunit protein uS2</fullName>
    </recommendedName>
    <alternativeName>
        <fullName evidence="2">30S ribosomal protein S2</fullName>
    </alternativeName>
</protein>
<evidence type="ECO:0000255" key="1">
    <source>
        <dbReference type="HAMAP-Rule" id="MF_00291"/>
    </source>
</evidence>
<evidence type="ECO:0000305" key="2"/>
<sequence>MSQVNMRDMLKAGVHFGHQTRYWNPKMGKFIFGARNKIHIINLEKTLPMFNEALTFVERLAAGKNKILFVGTKRSAGKIVREEAARCGMPYVDHRWLGGMLTNYKTIRQSIKRLRDLETQSQDGTFDKLTKKEALMRSRDLEKLERSLGGIKDMGGLPDALFVIDVDHERIAITEANKLGIPVIGVVDTNSSPEGVDYVIPGNDDAIRAVQLYLNSMAEAVIRGKQGAATSADEFVEEAPAESAEG</sequence>
<gene>
    <name evidence="1" type="primary">rpsB</name>
    <name type="ordered locus">PA14_17060</name>
</gene>
<proteinExistence type="inferred from homology"/>
<name>RS2_PSEAB</name>
<comment type="similarity">
    <text evidence="1">Belongs to the universal ribosomal protein uS2 family.</text>
</comment>
<keyword id="KW-0687">Ribonucleoprotein</keyword>
<keyword id="KW-0689">Ribosomal protein</keyword>
<feature type="chain" id="PRO_1000004030" description="Small ribosomal subunit protein uS2">
    <location>
        <begin position="1"/>
        <end position="246"/>
    </location>
</feature>
<organism>
    <name type="scientific">Pseudomonas aeruginosa (strain UCBPP-PA14)</name>
    <dbReference type="NCBI Taxonomy" id="208963"/>
    <lineage>
        <taxon>Bacteria</taxon>
        <taxon>Pseudomonadati</taxon>
        <taxon>Pseudomonadota</taxon>
        <taxon>Gammaproteobacteria</taxon>
        <taxon>Pseudomonadales</taxon>
        <taxon>Pseudomonadaceae</taxon>
        <taxon>Pseudomonas</taxon>
    </lineage>
</organism>
<dbReference type="EMBL" id="CP000438">
    <property type="protein sequence ID" value="ABJ12889.1"/>
    <property type="molecule type" value="Genomic_DNA"/>
</dbReference>
<dbReference type="RefSeq" id="WP_003092394.1">
    <property type="nucleotide sequence ID" value="NZ_CP034244.1"/>
</dbReference>
<dbReference type="SMR" id="Q02RC8"/>
<dbReference type="KEGG" id="pau:PA14_17060"/>
<dbReference type="PseudoCAP" id="PA14_17060"/>
<dbReference type="HOGENOM" id="CLU_040318_1_0_6"/>
<dbReference type="BioCyc" id="PAER208963:G1G74-1405-MONOMER"/>
<dbReference type="Proteomes" id="UP000000653">
    <property type="component" value="Chromosome"/>
</dbReference>
<dbReference type="GO" id="GO:0022627">
    <property type="term" value="C:cytosolic small ribosomal subunit"/>
    <property type="evidence" value="ECO:0007669"/>
    <property type="project" value="TreeGrafter"/>
</dbReference>
<dbReference type="GO" id="GO:0003735">
    <property type="term" value="F:structural constituent of ribosome"/>
    <property type="evidence" value="ECO:0007669"/>
    <property type="project" value="InterPro"/>
</dbReference>
<dbReference type="GO" id="GO:0006412">
    <property type="term" value="P:translation"/>
    <property type="evidence" value="ECO:0007669"/>
    <property type="project" value="UniProtKB-UniRule"/>
</dbReference>
<dbReference type="CDD" id="cd01425">
    <property type="entry name" value="RPS2"/>
    <property type="match status" value="1"/>
</dbReference>
<dbReference type="FunFam" id="1.10.287.610:FF:000001">
    <property type="entry name" value="30S ribosomal protein S2"/>
    <property type="match status" value="1"/>
</dbReference>
<dbReference type="Gene3D" id="3.40.50.10490">
    <property type="entry name" value="Glucose-6-phosphate isomerase like protein, domain 1"/>
    <property type="match status" value="1"/>
</dbReference>
<dbReference type="Gene3D" id="1.10.287.610">
    <property type="entry name" value="Helix hairpin bin"/>
    <property type="match status" value="1"/>
</dbReference>
<dbReference type="HAMAP" id="MF_00291_B">
    <property type="entry name" value="Ribosomal_uS2_B"/>
    <property type="match status" value="1"/>
</dbReference>
<dbReference type="InterPro" id="IPR001865">
    <property type="entry name" value="Ribosomal_uS2"/>
</dbReference>
<dbReference type="InterPro" id="IPR005706">
    <property type="entry name" value="Ribosomal_uS2_bac/mit/plastid"/>
</dbReference>
<dbReference type="InterPro" id="IPR018130">
    <property type="entry name" value="Ribosomal_uS2_CS"/>
</dbReference>
<dbReference type="InterPro" id="IPR023591">
    <property type="entry name" value="Ribosomal_uS2_flav_dom_sf"/>
</dbReference>
<dbReference type="NCBIfam" id="TIGR01011">
    <property type="entry name" value="rpsB_bact"/>
    <property type="match status" value="1"/>
</dbReference>
<dbReference type="PANTHER" id="PTHR12534">
    <property type="entry name" value="30S RIBOSOMAL PROTEIN S2 PROKARYOTIC AND ORGANELLAR"/>
    <property type="match status" value="1"/>
</dbReference>
<dbReference type="PANTHER" id="PTHR12534:SF0">
    <property type="entry name" value="SMALL RIBOSOMAL SUBUNIT PROTEIN US2M"/>
    <property type="match status" value="1"/>
</dbReference>
<dbReference type="Pfam" id="PF00318">
    <property type="entry name" value="Ribosomal_S2"/>
    <property type="match status" value="1"/>
</dbReference>
<dbReference type="PRINTS" id="PR00395">
    <property type="entry name" value="RIBOSOMALS2"/>
</dbReference>
<dbReference type="SUPFAM" id="SSF52313">
    <property type="entry name" value="Ribosomal protein S2"/>
    <property type="match status" value="1"/>
</dbReference>
<dbReference type="PROSITE" id="PS00962">
    <property type="entry name" value="RIBOSOMAL_S2_1"/>
    <property type="match status" value="1"/>
</dbReference>
<dbReference type="PROSITE" id="PS00963">
    <property type="entry name" value="RIBOSOMAL_S2_2"/>
    <property type="match status" value="1"/>
</dbReference>
<reference key="1">
    <citation type="journal article" date="2006" name="Genome Biol.">
        <title>Genomic analysis reveals that Pseudomonas aeruginosa virulence is combinatorial.</title>
        <authorList>
            <person name="Lee D.G."/>
            <person name="Urbach J.M."/>
            <person name="Wu G."/>
            <person name="Liberati N.T."/>
            <person name="Feinbaum R.L."/>
            <person name="Miyata S."/>
            <person name="Diggins L.T."/>
            <person name="He J."/>
            <person name="Saucier M."/>
            <person name="Deziel E."/>
            <person name="Friedman L."/>
            <person name="Li L."/>
            <person name="Grills G."/>
            <person name="Montgomery K."/>
            <person name="Kucherlapati R."/>
            <person name="Rahme L.G."/>
            <person name="Ausubel F.M."/>
        </authorList>
    </citation>
    <scope>NUCLEOTIDE SEQUENCE [LARGE SCALE GENOMIC DNA]</scope>
    <source>
        <strain>UCBPP-PA14</strain>
    </source>
</reference>